<gene>
    <name evidence="1" type="primary">hflD</name>
    <name type="ordered locus">ECUMN_1376</name>
</gene>
<protein>
    <recommendedName>
        <fullName evidence="1">High frequency lysogenization protein HflD</fullName>
    </recommendedName>
</protein>
<name>HFLD_ECOLU</name>
<feature type="chain" id="PRO_1000132287" description="High frequency lysogenization protein HflD">
    <location>
        <begin position="1"/>
        <end position="213"/>
    </location>
</feature>
<feature type="coiled-coil region" evidence="1">
    <location>
        <begin position="79"/>
        <end position="126"/>
    </location>
</feature>
<sequence>MAKNYYDITLALAGICQSARLVQQLAHQGHCDADALHVSLNSIIDMNPSSTLAVFGGSEANLRVGLETLLGVLNASSRQGLNAELTRYTLSLMVLERKLSSAKGALDTLGNRINGLQRQLEHFDLQSETLMSAMAAIYVDVISPLGPRIQVTGSPAVLQSPQVQAKVRATLLAGIRAAVLWHQVGGGRLQLMFSRNRLTTQAKQILAHLTPEL</sequence>
<dbReference type="EMBL" id="CU928163">
    <property type="protein sequence ID" value="CAR12585.1"/>
    <property type="molecule type" value="Genomic_DNA"/>
</dbReference>
<dbReference type="RefSeq" id="WP_001297479.1">
    <property type="nucleotide sequence ID" value="NC_011751.1"/>
</dbReference>
<dbReference type="RefSeq" id="YP_002412125.1">
    <property type="nucleotide sequence ID" value="NC_011751.1"/>
</dbReference>
<dbReference type="SMR" id="B7N3P2"/>
<dbReference type="STRING" id="585056.ECUMN_1376"/>
<dbReference type="GeneID" id="93776278"/>
<dbReference type="KEGG" id="eum:ECUMN_1376"/>
<dbReference type="PATRIC" id="fig|585056.7.peg.1581"/>
<dbReference type="HOGENOM" id="CLU_098920_0_0_6"/>
<dbReference type="Proteomes" id="UP000007097">
    <property type="component" value="Chromosome"/>
</dbReference>
<dbReference type="GO" id="GO:0005737">
    <property type="term" value="C:cytoplasm"/>
    <property type="evidence" value="ECO:0007669"/>
    <property type="project" value="UniProtKB-SubCell"/>
</dbReference>
<dbReference type="GO" id="GO:0005886">
    <property type="term" value="C:plasma membrane"/>
    <property type="evidence" value="ECO:0007669"/>
    <property type="project" value="UniProtKB-SubCell"/>
</dbReference>
<dbReference type="FunFam" id="1.10.3890.10:FF:000001">
    <property type="entry name" value="High frequency lysogenization protein HflD homolog"/>
    <property type="match status" value="1"/>
</dbReference>
<dbReference type="Gene3D" id="1.10.3890.10">
    <property type="entry name" value="HflD-like"/>
    <property type="match status" value="1"/>
</dbReference>
<dbReference type="HAMAP" id="MF_00695">
    <property type="entry name" value="HflD_protein"/>
    <property type="match status" value="1"/>
</dbReference>
<dbReference type="InterPro" id="IPR007451">
    <property type="entry name" value="HflD"/>
</dbReference>
<dbReference type="InterPro" id="IPR035932">
    <property type="entry name" value="HflD-like_sf"/>
</dbReference>
<dbReference type="NCBIfam" id="NF001245">
    <property type="entry name" value="PRK00218.1-1"/>
    <property type="match status" value="1"/>
</dbReference>
<dbReference type="NCBIfam" id="NF001246">
    <property type="entry name" value="PRK00218.1-2"/>
    <property type="match status" value="1"/>
</dbReference>
<dbReference type="NCBIfam" id="NF001248">
    <property type="entry name" value="PRK00218.1-4"/>
    <property type="match status" value="1"/>
</dbReference>
<dbReference type="NCBIfam" id="NF001249">
    <property type="entry name" value="PRK00218.1-5"/>
    <property type="match status" value="1"/>
</dbReference>
<dbReference type="PANTHER" id="PTHR38100">
    <property type="entry name" value="HIGH FREQUENCY LYSOGENIZATION PROTEIN HFLD"/>
    <property type="match status" value="1"/>
</dbReference>
<dbReference type="PANTHER" id="PTHR38100:SF1">
    <property type="entry name" value="HIGH FREQUENCY LYSOGENIZATION PROTEIN HFLD"/>
    <property type="match status" value="1"/>
</dbReference>
<dbReference type="Pfam" id="PF04356">
    <property type="entry name" value="DUF489"/>
    <property type="match status" value="1"/>
</dbReference>
<dbReference type="SUPFAM" id="SSF101322">
    <property type="entry name" value="YcfC-like"/>
    <property type="match status" value="1"/>
</dbReference>
<evidence type="ECO:0000255" key="1">
    <source>
        <dbReference type="HAMAP-Rule" id="MF_00695"/>
    </source>
</evidence>
<reference key="1">
    <citation type="journal article" date="2009" name="PLoS Genet.">
        <title>Organised genome dynamics in the Escherichia coli species results in highly diverse adaptive paths.</title>
        <authorList>
            <person name="Touchon M."/>
            <person name="Hoede C."/>
            <person name="Tenaillon O."/>
            <person name="Barbe V."/>
            <person name="Baeriswyl S."/>
            <person name="Bidet P."/>
            <person name="Bingen E."/>
            <person name="Bonacorsi S."/>
            <person name="Bouchier C."/>
            <person name="Bouvet O."/>
            <person name="Calteau A."/>
            <person name="Chiapello H."/>
            <person name="Clermont O."/>
            <person name="Cruveiller S."/>
            <person name="Danchin A."/>
            <person name="Diard M."/>
            <person name="Dossat C."/>
            <person name="Karoui M.E."/>
            <person name="Frapy E."/>
            <person name="Garry L."/>
            <person name="Ghigo J.M."/>
            <person name="Gilles A.M."/>
            <person name="Johnson J."/>
            <person name="Le Bouguenec C."/>
            <person name="Lescat M."/>
            <person name="Mangenot S."/>
            <person name="Martinez-Jehanne V."/>
            <person name="Matic I."/>
            <person name="Nassif X."/>
            <person name="Oztas S."/>
            <person name="Petit M.A."/>
            <person name="Pichon C."/>
            <person name="Rouy Z."/>
            <person name="Ruf C.S."/>
            <person name="Schneider D."/>
            <person name="Tourret J."/>
            <person name="Vacherie B."/>
            <person name="Vallenet D."/>
            <person name="Medigue C."/>
            <person name="Rocha E.P.C."/>
            <person name="Denamur E."/>
        </authorList>
    </citation>
    <scope>NUCLEOTIDE SEQUENCE [LARGE SCALE GENOMIC DNA]</scope>
    <source>
        <strain>UMN026 / ExPEC</strain>
    </source>
</reference>
<keyword id="KW-0997">Cell inner membrane</keyword>
<keyword id="KW-1003">Cell membrane</keyword>
<keyword id="KW-0175">Coiled coil</keyword>
<keyword id="KW-0963">Cytoplasm</keyword>
<keyword id="KW-0472">Membrane</keyword>
<proteinExistence type="inferred from homology"/>
<accession>B7N3P2</accession>
<comment type="function">
    <text evidence="1">Negative regulator of phage lambda lysogenization. Contributes to the degradation of the phage regulatory protein CII. Acts probably by holding CII on the membrane surface, away from the target promoters, but close to the FtsH protease.</text>
</comment>
<comment type="subunit">
    <text evidence="1">Interacts with CII protein from phage lambda.</text>
</comment>
<comment type="subcellular location">
    <subcellularLocation>
        <location>Cytoplasm</location>
    </subcellularLocation>
    <subcellularLocation>
        <location evidence="1">Cell inner membrane</location>
        <topology evidence="1">Peripheral membrane protein</topology>
        <orientation evidence="1">Cytoplasmic side</orientation>
    </subcellularLocation>
</comment>
<comment type="similarity">
    <text evidence="1">Belongs to the HflD family.</text>
</comment>
<organism>
    <name type="scientific">Escherichia coli O17:K52:H18 (strain UMN026 / ExPEC)</name>
    <dbReference type="NCBI Taxonomy" id="585056"/>
    <lineage>
        <taxon>Bacteria</taxon>
        <taxon>Pseudomonadati</taxon>
        <taxon>Pseudomonadota</taxon>
        <taxon>Gammaproteobacteria</taxon>
        <taxon>Enterobacterales</taxon>
        <taxon>Enterobacteriaceae</taxon>
        <taxon>Escherichia</taxon>
    </lineage>
</organism>